<comment type="function">
    <text evidence="1">Cell wall formation. Adds enolpyruvyl to UDP-N-acetylglucosamine.</text>
</comment>
<comment type="catalytic activity">
    <reaction evidence="1">
        <text>phosphoenolpyruvate + UDP-N-acetyl-alpha-D-glucosamine = UDP-N-acetyl-3-O-(1-carboxyvinyl)-alpha-D-glucosamine + phosphate</text>
        <dbReference type="Rhea" id="RHEA:18681"/>
        <dbReference type="ChEBI" id="CHEBI:43474"/>
        <dbReference type="ChEBI" id="CHEBI:57705"/>
        <dbReference type="ChEBI" id="CHEBI:58702"/>
        <dbReference type="ChEBI" id="CHEBI:68483"/>
        <dbReference type="EC" id="2.5.1.7"/>
    </reaction>
</comment>
<comment type="pathway">
    <text evidence="1">Cell wall biogenesis; peptidoglycan biosynthesis.</text>
</comment>
<comment type="subcellular location">
    <subcellularLocation>
        <location evidence="1">Cytoplasm</location>
    </subcellularLocation>
</comment>
<comment type="similarity">
    <text evidence="1">Belongs to the EPSP synthase family. MurA subfamily.</text>
</comment>
<proteinExistence type="inferred from homology"/>
<accession>Q9PDG4</accession>
<gene>
    <name evidence="1" type="primary">murA</name>
    <name type="ordered locus">XF_1415</name>
</gene>
<dbReference type="EC" id="2.5.1.7" evidence="1"/>
<dbReference type="EMBL" id="AE003849">
    <property type="protein sequence ID" value="AAF84224.1"/>
    <property type="molecule type" value="Genomic_DNA"/>
</dbReference>
<dbReference type="PIR" id="D82684">
    <property type="entry name" value="D82684"/>
</dbReference>
<dbReference type="RefSeq" id="WP_010893916.1">
    <property type="nucleotide sequence ID" value="NC_002488.3"/>
</dbReference>
<dbReference type="SMR" id="Q9PDG4"/>
<dbReference type="STRING" id="160492.XF_1415"/>
<dbReference type="KEGG" id="xfa:XF_1415"/>
<dbReference type="eggNOG" id="COG0766">
    <property type="taxonomic scope" value="Bacteria"/>
</dbReference>
<dbReference type="HOGENOM" id="CLU_027387_0_0_6"/>
<dbReference type="UniPathway" id="UPA00219"/>
<dbReference type="Proteomes" id="UP000000812">
    <property type="component" value="Chromosome"/>
</dbReference>
<dbReference type="GO" id="GO:0005737">
    <property type="term" value="C:cytoplasm"/>
    <property type="evidence" value="ECO:0007669"/>
    <property type="project" value="UniProtKB-SubCell"/>
</dbReference>
<dbReference type="GO" id="GO:0008760">
    <property type="term" value="F:UDP-N-acetylglucosamine 1-carboxyvinyltransferase activity"/>
    <property type="evidence" value="ECO:0007669"/>
    <property type="project" value="UniProtKB-UniRule"/>
</dbReference>
<dbReference type="GO" id="GO:0051301">
    <property type="term" value="P:cell division"/>
    <property type="evidence" value="ECO:0007669"/>
    <property type="project" value="UniProtKB-KW"/>
</dbReference>
<dbReference type="GO" id="GO:0071555">
    <property type="term" value="P:cell wall organization"/>
    <property type="evidence" value="ECO:0007669"/>
    <property type="project" value="UniProtKB-KW"/>
</dbReference>
<dbReference type="GO" id="GO:0009252">
    <property type="term" value="P:peptidoglycan biosynthetic process"/>
    <property type="evidence" value="ECO:0007669"/>
    <property type="project" value="UniProtKB-UniRule"/>
</dbReference>
<dbReference type="GO" id="GO:0008360">
    <property type="term" value="P:regulation of cell shape"/>
    <property type="evidence" value="ECO:0007669"/>
    <property type="project" value="UniProtKB-KW"/>
</dbReference>
<dbReference type="GO" id="GO:0019277">
    <property type="term" value="P:UDP-N-acetylgalactosamine biosynthetic process"/>
    <property type="evidence" value="ECO:0007669"/>
    <property type="project" value="InterPro"/>
</dbReference>
<dbReference type="CDD" id="cd01555">
    <property type="entry name" value="UdpNAET"/>
    <property type="match status" value="1"/>
</dbReference>
<dbReference type="FunFam" id="3.65.10.10:FF:000001">
    <property type="entry name" value="UDP-N-acetylglucosamine 1-carboxyvinyltransferase"/>
    <property type="match status" value="1"/>
</dbReference>
<dbReference type="FunFam" id="3.65.10.10:FF:000002">
    <property type="entry name" value="UDP-N-acetylglucosamine 1-carboxyvinyltransferase"/>
    <property type="match status" value="1"/>
</dbReference>
<dbReference type="Gene3D" id="3.65.10.10">
    <property type="entry name" value="Enolpyruvate transferase domain"/>
    <property type="match status" value="2"/>
</dbReference>
<dbReference type="HAMAP" id="MF_00111">
    <property type="entry name" value="MurA"/>
    <property type="match status" value="1"/>
</dbReference>
<dbReference type="InterPro" id="IPR001986">
    <property type="entry name" value="Enolpyruvate_Tfrase_dom"/>
</dbReference>
<dbReference type="InterPro" id="IPR036968">
    <property type="entry name" value="Enolpyruvate_Tfrase_sf"/>
</dbReference>
<dbReference type="InterPro" id="IPR050068">
    <property type="entry name" value="MurA_subfamily"/>
</dbReference>
<dbReference type="InterPro" id="IPR013792">
    <property type="entry name" value="RNA3'P_cycl/enolpyr_Trfase_a/b"/>
</dbReference>
<dbReference type="InterPro" id="IPR005750">
    <property type="entry name" value="UDP_GlcNAc_COvinyl_MurA"/>
</dbReference>
<dbReference type="NCBIfam" id="TIGR01072">
    <property type="entry name" value="murA"/>
    <property type="match status" value="1"/>
</dbReference>
<dbReference type="NCBIfam" id="NF006873">
    <property type="entry name" value="PRK09369.1"/>
    <property type="match status" value="1"/>
</dbReference>
<dbReference type="PANTHER" id="PTHR43783">
    <property type="entry name" value="UDP-N-ACETYLGLUCOSAMINE 1-CARBOXYVINYLTRANSFERASE"/>
    <property type="match status" value="1"/>
</dbReference>
<dbReference type="PANTHER" id="PTHR43783:SF1">
    <property type="entry name" value="UDP-N-ACETYLGLUCOSAMINE 1-CARBOXYVINYLTRANSFERASE"/>
    <property type="match status" value="1"/>
</dbReference>
<dbReference type="Pfam" id="PF00275">
    <property type="entry name" value="EPSP_synthase"/>
    <property type="match status" value="1"/>
</dbReference>
<dbReference type="SUPFAM" id="SSF55205">
    <property type="entry name" value="EPT/RTPC-like"/>
    <property type="match status" value="1"/>
</dbReference>
<protein>
    <recommendedName>
        <fullName evidence="1">UDP-N-acetylglucosamine 1-carboxyvinyltransferase</fullName>
        <ecNumber evidence="1">2.5.1.7</ecNumber>
    </recommendedName>
    <alternativeName>
        <fullName evidence="1">Enoylpyruvate transferase</fullName>
    </alternativeName>
    <alternativeName>
        <fullName evidence="1">UDP-N-acetylglucosamine enolpyruvyl transferase</fullName>
        <shortName evidence="1">EPT</shortName>
    </alternativeName>
</protein>
<sequence>MSKIVVAGGTPLCGDVRISGAKNAVLPILSATLLADAPVEISNVPYLHDVITMINLLRELGAGVTMNEGIEAKGRSITVDPRWVRQHMVPYDLVKTMRASVLLLGPLLACYGAAEVALPGGCAIGSRPVDQHIRGLQSLGAEITVENGYIKASVSQGRLKGGRFVFDVVSVTGTENLLMAAAVAQGTSVIENAAMEPEVVDLAECLIALGARIEGAGTPRIVVEGVERLKGGQYAVLPDRIETGTFLVATAMTGGRISMQQVRPQTLDAVLGKLTEAGACIEIGEDSIRLDMQGRRPCSVNLTTAPYPGFPTDMQAQFMALNCVAEGVGVIKETIFENRFMHVDELLRLGAKIQIEGHTAIVQGVERLSGAPVMATDLRASASLILAGLVAEGETIIDRIYHLDRGYENIEGKLGALGASIRRMT</sequence>
<keyword id="KW-0131">Cell cycle</keyword>
<keyword id="KW-0132">Cell division</keyword>
<keyword id="KW-0133">Cell shape</keyword>
<keyword id="KW-0961">Cell wall biogenesis/degradation</keyword>
<keyword id="KW-0963">Cytoplasm</keyword>
<keyword id="KW-0573">Peptidoglycan synthesis</keyword>
<keyword id="KW-0670">Pyruvate</keyword>
<keyword id="KW-0808">Transferase</keyword>
<name>MURA_XYLFA</name>
<reference key="1">
    <citation type="journal article" date="2000" name="Nature">
        <title>The genome sequence of the plant pathogen Xylella fastidiosa.</title>
        <authorList>
            <person name="Simpson A.J.G."/>
            <person name="Reinach F.C."/>
            <person name="Arruda P."/>
            <person name="Abreu F.A."/>
            <person name="Acencio M."/>
            <person name="Alvarenga R."/>
            <person name="Alves L.M.C."/>
            <person name="Araya J.E."/>
            <person name="Baia G.S."/>
            <person name="Baptista C.S."/>
            <person name="Barros M.H."/>
            <person name="Bonaccorsi E.D."/>
            <person name="Bordin S."/>
            <person name="Bove J.M."/>
            <person name="Briones M.R.S."/>
            <person name="Bueno M.R.P."/>
            <person name="Camargo A.A."/>
            <person name="Camargo L.E.A."/>
            <person name="Carraro D.M."/>
            <person name="Carrer H."/>
            <person name="Colauto N.B."/>
            <person name="Colombo C."/>
            <person name="Costa F.F."/>
            <person name="Costa M.C.R."/>
            <person name="Costa-Neto C.M."/>
            <person name="Coutinho L.L."/>
            <person name="Cristofani M."/>
            <person name="Dias-Neto E."/>
            <person name="Docena C."/>
            <person name="El-Dorry H."/>
            <person name="Facincani A.P."/>
            <person name="Ferreira A.J.S."/>
            <person name="Ferreira V.C.A."/>
            <person name="Ferro J.A."/>
            <person name="Fraga J.S."/>
            <person name="Franca S.C."/>
            <person name="Franco M.C."/>
            <person name="Frohme M."/>
            <person name="Furlan L.R."/>
            <person name="Garnier M."/>
            <person name="Goldman G.H."/>
            <person name="Goldman M.H.S."/>
            <person name="Gomes S.L."/>
            <person name="Gruber A."/>
            <person name="Ho P.L."/>
            <person name="Hoheisel J.D."/>
            <person name="Junqueira M.L."/>
            <person name="Kemper E.L."/>
            <person name="Kitajima J.P."/>
            <person name="Krieger J.E."/>
            <person name="Kuramae E.E."/>
            <person name="Laigret F."/>
            <person name="Lambais M.R."/>
            <person name="Leite L.C.C."/>
            <person name="Lemos E.G.M."/>
            <person name="Lemos M.V.F."/>
            <person name="Lopes S.A."/>
            <person name="Lopes C.R."/>
            <person name="Machado J.A."/>
            <person name="Machado M.A."/>
            <person name="Madeira A.M.B.N."/>
            <person name="Madeira H.M.F."/>
            <person name="Marino C.L."/>
            <person name="Marques M.V."/>
            <person name="Martins E.A.L."/>
            <person name="Martins E.M.F."/>
            <person name="Matsukuma A.Y."/>
            <person name="Menck C.F.M."/>
            <person name="Miracca E.C."/>
            <person name="Miyaki C.Y."/>
            <person name="Monteiro-Vitorello C.B."/>
            <person name="Moon D.H."/>
            <person name="Nagai M.A."/>
            <person name="Nascimento A.L.T.O."/>
            <person name="Netto L.E.S."/>
            <person name="Nhani A. Jr."/>
            <person name="Nobrega F.G."/>
            <person name="Nunes L.R."/>
            <person name="Oliveira M.A."/>
            <person name="de Oliveira M.C."/>
            <person name="de Oliveira R.C."/>
            <person name="Palmieri D.A."/>
            <person name="Paris A."/>
            <person name="Peixoto B.R."/>
            <person name="Pereira G.A.G."/>
            <person name="Pereira H.A. Jr."/>
            <person name="Pesquero J.B."/>
            <person name="Quaggio R.B."/>
            <person name="Roberto P.G."/>
            <person name="Rodrigues V."/>
            <person name="de Rosa A.J.M."/>
            <person name="de Rosa V.E. Jr."/>
            <person name="de Sa R.G."/>
            <person name="Santelli R.V."/>
            <person name="Sawasaki H.E."/>
            <person name="da Silva A.C.R."/>
            <person name="da Silva A.M."/>
            <person name="da Silva F.R."/>
            <person name="Silva W.A. Jr."/>
            <person name="da Silveira J.F."/>
            <person name="Silvestri M.L.Z."/>
            <person name="Siqueira W.J."/>
            <person name="de Souza A.A."/>
            <person name="de Souza A.P."/>
            <person name="Terenzi M.F."/>
            <person name="Truffi D."/>
            <person name="Tsai S.M."/>
            <person name="Tsuhako M.H."/>
            <person name="Vallada H."/>
            <person name="Van Sluys M.A."/>
            <person name="Verjovski-Almeida S."/>
            <person name="Vettore A.L."/>
            <person name="Zago M.A."/>
            <person name="Zatz M."/>
            <person name="Meidanis J."/>
            <person name="Setubal J.C."/>
        </authorList>
    </citation>
    <scope>NUCLEOTIDE SEQUENCE [LARGE SCALE GENOMIC DNA]</scope>
    <source>
        <strain>9a5c</strain>
    </source>
</reference>
<evidence type="ECO:0000255" key="1">
    <source>
        <dbReference type="HAMAP-Rule" id="MF_00111"/>
    </source>
</evidence>
<feature type="chain" id="PRO_0000178955" description="UDP-N-acetylglucosamine 1-carboxyvinyltransferase">
    <location>
        <begin position="1"/>
        <end position="425"/>
    </location>
</feature>
<feature type="active site" description="Proton donor" evidence="1">
    <location>
        <position position="122"/>
    </location>
</feature>
<feature type="binding site" evidence="1">
    <location>
        <begin position="22"/>
        <end position="23"/>
    </location>
    <ligand>
        <name>phosphoenolpyruvate</name>
        <dbReference type="ChEBI" id="CHEBI:58702"/>
    </ligand>
</feature>
<feature type="binding site" evidence="1">
    <location>
        <position position="98"/>
    </location>
    <ligand>
        <name>UDP-N-acetyl-alpha-D-glucosamine</name>
        <dbReference type="ChEBI" id="CHEBI:57705"/>
    </ligand>
</feature>
<feature type="binding site" evidence="1">
    <location>
        <begin position="127"/>
        <end position="131"/>
    </location>
    <ligand>
        <name>UDP-N-acetyl-alpha-D-glucosamine</name>
        <dbReference type="ChEBI" id="CHEBI:57705"/>
    </ligand>
</feature>
<feature type="binding site" evidence="1">
    <location>
        <position position="313"/>
    </location>
    <ligand>
        <name>UDP-N-acetyl-alpha-D-glucosamine</name>
        <dbReference type="ChEBI" id="CHEBI:57705"/>
    </ligand>
</feature>
<feature type="binding site" evidence="1">
    <location>
        <position position="335"/>
    </location>
    <ligand>
        <name>UDP-N-acetyl-alpha-D-glucosamine</name>
        <dbReference type="ChEBI" id="CHEBI:57705"/>
    </ligand>
</feature>
<feature type="modified residue" description="2-(S-cysteinyl)pyruvic acid O-phosphothioketal" evidence="1">
    <location>
        <position position="122"/>
    </location>
</feature>
<organism>
    <name type="scientific">Xylella fastidiosa (strain 9a5c)</name>
    <dbReference type="NCBI Taxonomy" id="160492"/>
    <lineage>
        <taxon>Bacteria</taxon>
        <taxon>Pseudomonadati</taxon>
        <taxon>Pseudomonadota</taxon>
        <taxon>Gammaproteobacteria</taxon>
        <taxon>Lysobacterales</taxon>
        <taxon>Lysobacteraceae</taxon>
        <taxon>Xylella</taxon>
    </lineage>
</organism>